<keyword id="KW-0687">Ribonucleoprotein</keyword>
<keyword id="KW-0689">Ribosomal protein</keyword>
<dbReference type="EMBL" id="BA000012">
    <property type="protein sequence ID" value="BAB51381.1"/>
    <property type="molecule type" value="Genomic_DNA"/>
</dbReference>
<dbReference type="RefSeq" id="WP_008833937.1">
    <property type="nucleotide sequence ID" value="NC_002678.2"/>
</dbReference>
<dbReference type="SMR" id="Q98D90"/>
<dbReference type="GeneID" id="91564817"/>
<dbReference type="KEGG" id="mlo:msr4809"/>
<dbReference type="eggNOG" id="COG0230">
    <property type="taxonomic scope" value="Bacteria"/>
</dbReference>
<dbReference type="HOGENOM" id="CLU_129938_2_0_5"/>
<dbReference type="Proteomes" id="UP000000552">
    <property type="component" value="Chromosome"/>
</dbReference>
<dbReference type="GO" id="GO:1990904">
    <property type="term" value="C:ribonucleoprotein complex"/>
    <property type="evidence" value="ECO:0007669"/>
    <property type="project" value="UniProtKB-KW"/>
</dbReference>
<dbReference type="GO" id="GO:0005840">
    <property type="term" value="C:ribosome"/>
    <property type="evidence" value="ECO:0007669"/>
    <property type="project" value="UniProtKB-KW"/>
</dbReference>
<dbReference type="GO" id="GO:0003735">
    <property type="term" value="F:structural constituent of ribosome"/>
    <property type="evidence" value="ECO:0007669"/>
    <property type="project" value="InterPro"/>
</dbReference>
<dbReference type="GO" id="GO:0006412">
    <property type="term" value="P:translation"/>
    <property type="evidence" value="ECO:0007669"/>
    <property type="project" value="UniProtKB-UniRule"/>
</dbReference>
<dbReference type="FunFam" id="1.10.287.3980:FF:000001">
    <property type="entry name" value="Mitochondrial ribosomal protein L34"/>
    <property type="match status" value="1"/>
</dbReference>
<dbReference type="Gene3D" id="1.10.287.3980">
    <property type="match status" value="1"/>
</dbReference>
<dbReference type="HAMAP" id="MF_00391">
    <property type="entry name" value="Ribosomal_bL34"/>
    <property type="match status" value="1"/>
</dbReference>
<dbReference type="InterPro" id="IPR000271">
    <property type="entry name" value="Ribosomal_bL34"/>
</dbReference>
<dbReference type="InterPro" id="IPR020939">
    <property type="entry name" value="Ribosomal_bL34_CS"/>
</dbReference>
<dbReference type="NCBIfam" id="TIGR01030">
    <property type="entry name" value="rpmH_bact"/>
    <property type="match status" value="1"/>
</dbReference>
<dbReference type="PANTHER" id="PTHR14503:SF4">
    <property type="entry name" value="LARGE RIBOSOMAL SUBUNIT PROTEIN BL34M"/>
    <property type="match status" value="1"/>
</dbReference>
<dbReference type="PANTHER" id="PTHR14503">
    <property type="entry name" value="MITOCHONDRIAL RIBOSOMAL PROTEIN 34 FAMILY MEMBER"/>
    <property type="match status" value="1"/>
</dbReference>
<dbReference type="Pfam" id="PF00468">
    <property type="entry name" value="Ribosomal_L34"/>
    <property type="match status" value="1"/>
</dbReference>
<dbReference type="PROSITE" id="PS00784">
    <property type="entry name" value="RIBOSOMAL_L34"/>
    <property type="match status" value="1"/>
</dbReference>
<accession>Q98D90</accession>
<feature type="chain" id="PRO_0000187447" description="Large ribosomal subunit protein bL34">
    <location>
        <begin position="1"/>
        <end position="44"/>
    </location>
</feature>
<feature type="region of interest" description="Disordered" evidence="2">
    <location>
        <begin position="24"/>
        <end position="44"/>
    </location>
</feature>
<feature type="compositionally biased region" description="Basic residues" evidence="2">
    <location>
        <begin position="34"/>
        <end position="44"/>
    </location>
</feature>
<protein>
    <recommendedName>
        <fullName evidence="1">Large ribosomal subunit protein bL34</fullName>
    </recommendedName>
    <alternativeName>
        <fullName evidence="3">50S ribosomal protein L34</fullName>
    </alternativeName>
</protein>
<organism>
    <name type="scientific">Mesorhizobium japonicum (strain LMG 29417 / CECT 9101 / MAFF 303099)</name>
    <name type="common">Mesorhizobium loti (strain MAFF 303099)</name>
    <dbReference type="NCBI Taxonomy" id="266835"/>
    <lineage>
        <taxon>Bacteria</taxon>
        <taxon>Pseudomonadati</taxon>
        <taxon>Pseudomonadota</taxon>
        <taxon>Alphaproteobacteria</taxon>
        <taxon>Hyphomicrobiales</taxon>
        <taxon>Phyllobacteriaceae</taxon>
        <taxon>Mesorhizobium</taxon>
    </lineage>
</organism>
<sequence>MKRTYQPSKLVRKRRHGFRARMATKGGRGVVAARRNRGRKRLSA</sequence>
<gene>
    <name evidence="1" type="primary">rpmH</name>
    <name type="ordered locus">msr4809</name>
</gene>
<evidence type="ECO:0000255" key="1">
    <source>
        <dbReference type="HAMAP-Rule" id="MF_00391"/>
    </source>
</evidence>
<evidence type="ECO:0000256" key="2">
    <source>
        <dbReference type="SAM" id="MobiDB-lite"/>
    </source>
</evidence>
<evidence type="ECO:0000305" key="3"/>
<proteinExistence type="inferred from homology"/>
<comment type="similarity">
    <text evidence="1">Belongs to the bacterial ribosomal protein bL34 family.</text>
</comment>
<reference key="1">
    <citation type="journal article" date="2000" name="DNA Res.">
        <title>Complete genome structure of the nitrogen-fixing symbiotic bacterium Mesorhizobium loti.</title>
        <authorList>
            <person name="Kaneko T."/>
            <person name="Nakamura Y."/>
            <person name="Sato S."/>
            <person name="Asamizu E."/>
            <person name="Kato T."/>
            <person name="Sasamoto S."/>
            <person name="Watanabe A."/>
            <person name="Idesawa K."/>
            <person name="Ishikawa A."/>
            <person name="Kawashima K."/>
            <person name="Kimura T."/>
            <person name="Kishida Y."/>
            <person name="Kiyokawa C."/>
            <person name="Kohara M."/>
            <person name="Matsumoto M."/>
            <person name="Matsuno A."/>
            <person name="Mochizuki Y."/>
            <person name="Nakayama S."/>
            <person name="Nakazaki N."/>
            <person name="Shimpo S."/>
            <person name="Sugimoto M."/>
            <person name="Takeuchi C."/>
            <person name="Yamada M."/>
            <person name="Tabata S."/>
        </authorList>
    </citation>
    <scope>NUCLEOTIDE SEQUENCE [LARGE SCALE GENOMIC DNA]</scope>
    <source>
        <strain>LMG 29417 / CECT 9101 / MAFF 303099</strain>
    </source>
</reference>
<name>RL34_RHILO</name>